<sequence length="591" mass="67278">MEGKWLLCLLLVLGTAAVEAHDGHDDDAIDIEDDLDDVIEEVEDSKSKSDASTPPSPKVTYKAPVPTGEVYFADSFDRGSLSGWILSKAKKDDTDDEIAKYDGKWEVDEMKETKLPGDKGLVLMSRAKHHAISAKLNKPFLFDTKPLIVQYEVNFQNGIECGGAYVKLLSKTAELSLDQFHDKTPYTIMFGPDKCGEDYKLHFIFRHKNPKTGVYEEKHAKRPDADLKTYFTDKKTHLYTLILNPDNSFEILVDQSVVNSGNLLNDMTPPVNPSREIEDPEDRKPEDWDERPKIADPDAVKPDDWDEDAPSKIPDEEATKPEGWLDDEPEYIPDPDAEKPEDWDEDMDGEWEAPQIANPKCESAPGCGVWQRPMIDNPNYKGKWKPPMIDNPNYQGIWKPRKIPNPDFFEDLEPFKMTPFSAIGLELWSMTSDIFFDNFIISGDRRVVDDWANDGWGLKKAADGAAEPGVVLQMLEAAEERPWLWVVYILTVALPVFLVILFCCSGKKQSNAMEYKKTDAPQPDVKDEEGKEEEKNKRDEEEEEEKLEEKQKSDAEEDGVTGSQDEEDSKPKAEEDEILNRSPRNRKPRRE</sequence>
<dbReference type="EMBL" id="L18888">
    <property type="protein sequence ID" value="AAA21014.1"/>
    <property type="molecule type" value="mRNA"/>
</dbReference>
<dbReference type="EMBL" id="BC012408">
    <property type="protein sequence ID" value="AAH12408.1"/>
    <property type="molecule type" value="mRNA"/>
</dbReference>
<dbReference type="EMBL" id="BC040244">
    <property type="protein sequence ID" value="AAH40244.1"/>
    <property type="molecule type" value="mRNA"/>
</dbReference>
<dbReference type="EMBL" id="AK084175">
    <property type="protein sequence ID" value="BAC39133.1"/>
    <property type="molecule type" value="mRNA"/>
</dbReference>
<dbReference type="EMBL" id="L23865">
    <property type="protein sequence ID" value="AAA62450.1"/>
    <property type="molecule type" value="mRNA"/>
</dbReference>
<dbReference type="CCDS" id="CCDS24633.1"/>
<dbReference type="PIR" id="B54354">
    <property type="entry name" value="B54354"/>
</dbReference>
<dbReference type="RefSeq" id="NP_001103969.1">
    <property type="nucleotide sequence ID" value="NM_001110499.1"/>
</dbReference>
<dbReference type="RefSeq" id="NP_001103970.1">
    <property type="nucleotide sequence ID" value="NM_001110500.1"/>
</dbReference>
<dbReference type="RefSeq" id="NP_031623.1">
    <property type="nucleotide sequence ID" value="NM_007597.3"/>
</dbReference>
<dbReference type="SMR" id="P35564"/>
<dbReference type="BioGRID" id="198467">
    <property type="interactions" value="54"/>
</dbReference>
<dbReference type="CORUM" id="P35564"/>
<dbReference type="FunCoup" id="P35564">
    <property type="interactions" value="2430"/>
</dbReference>
<dbReference type="IntAct" id="P35564">
    <property type="interactions" value="15"/>
</dbReference>
<dbReference type="MINT" id="P35564"/>
<dbReference type="STRING" id="10090.ENSMUSP00000137440"/>
<dbReference type="GlyGen" id="P35564">
    <property type="glycosylation" value="3 sites, 1 N-linked glycan (1 site), 1 O-linked glycan (2 sites)"/>
</dbReference>
<dbReference type="iPTMnet" id="P35564"/>
<dbReference type="PhosphoSitePlus" id="P35564"/>
<dbReference type="SwissPalm" id="P35564"/>
<dbReference type="jPOST" id="P35564"/>
<dbReference type="PaxDb" id="10090-ENSMUSP00000020637"/>
<dbReference type="PeptideAtlas" id="P35564"/>
<dbReference type="ProteomicsDB" id="265514"/>
<dbReference type="Pumba" id="P35564"/>
<dbReference type="Antibodypedia" id="2421">
    <property type="antibodies" value="1179 antibodies from 45 providers"/>
</dbReference>
<dbReference type="DNASU" id="12330"/>
<dbReference type="Ensembl" id="ENSMUST00000020637.9">
    <property type="protein sequence ID" value="ENSMUSP00000020637.9"/>
    <property type="gene ID" value="ENSMUSG00000020368.16"/>
</dbReference>
<dbReference type="Ensembl" id="ENSMUST00000179865.8">
    <property type="protein sequence ID" value="ENSMUSP00000137440.2"/>
    <property type="gene ID" value="ENSMUSG00000020368.16"/>
</dbReference>
<dbReference type="GeneID" id="12330"/>
<dbReference type="KEGG" id="mmu:12330"/>
<dbReference type="UCSC" id="uc007isf.2">
    <property type="organism name" value="mouse"/>
</dbReference>
<dbReference type="AGR" id="MGI:88261"/>
<dbReference type="CTD" id="821"/>
<dbReference type="MGI" id="MGI:88261">
    <property type="gene designation" value="Canx"/>
</dbReference>
<dbReference type="VEuPathDB" id="HostDB:ENSMUSG00000020368"/>
<dbReference type="eggNOG" id="KOG0675">
    <property type="taxonomic scope" value="Eukaryota"/>
</dbReference>
<dbReference type="GeneTree" id="ENSGT00950000182915"/>
<dbReference type="HOGENOM" id="CLU_018224_2_0_1"/>
<dbReference type="InParanoid" id="P35564"/>
<dbReference type="OMA" id="LFWLKQY"/>
<dbReference type="OrthoDB" id="1938156at2759"/>
<dbReference type="PhylomeDB" id="P35564"/>
<dbReference type="TreeFam" id="TF300618"/>
<dbReference type="Reactome" id="R-MMU-2132295">
    <property type="pathway name" value="MHC class II antigen presentation"/>
</dbReference>
<dbReference type="Reactome" id="R-MMU-8984722">
    <property type="pathway name" value="Interleukin-35 Signalling"/>
</dbReference>
<dbReference type="Reactome" id="R-MMU-901042">
    <property type="pathway name" value="Calnexin/calreticulin cycle"/>
</dbReference>
<dbReference type="Reactome" id="R-MMU-9020956">
    <property type="pathway name" value="Interleukin-27 signaling"/>
</dbReference>
<dbReference type="Reactome" id="R-MMU-983170">
    <property type="pathway name" value="Antigen Presentation: Folding, assembly and peptide loading of class I MHC"/>
</dbReference>
<dbReference type="BioGRID-ORCS" id="12330">
    <property type="hits" value="2 hits in 79 CRISPR screens"/>
</dbReference>
<dbReference type="ChiTaRS" id="Canx">
    <property type="organism name" value="mouse"/>
</dbReference>
<dbReference type="PRO" id="PR:P35564"/>
<dbReference type="Proteomes" id="UP000000589">
    <property type="component" value="Chromosome 11"/>
</dbReference>
<dbReference type="RNAct" id="P35564">
    <property type="molecule type" value="protein"/>
</dbReference>
<dbReference type="Bgee" id="ENSMUSG00000020368">
    <property type="expression patterns" value="Expressed in ureteric bud tip and 257 other cell types or tissues"/>
</dbReference>
<dbReference type="ExpressionAtlas" id="P35564">
    <property type="expression patterns" value="baseline and differential"/>
</dbReference>
<dbReference type="GO" id="GO:0005783">
    <property type="term" value="C:endoplasmic reticulum"/>
    <property type="evidence" value="ECO:0000314"/>
    <property type="project" value="UniProtKB"/>
</dbReference>
<dbReference type="GO" id="GO:0005789">
    <property type="term" value="C:endoplasmic reticulum membrane"/>
    <property type="evidence" value="ECO:0000250"/>
    <property type="project" value="AgBase"/>
</dbReference>
<dbReference type="GO" id="GO:0044322">
    <property type="term" value="C:endoplasmic reticulum quality control compartment"/>
    <property type="evidence" value="ECO:0000314"/>
    <property type="project" value="UniProtKB"/>
</dbReference>
<dbReference type="GO" id="GO:0098553">
    <property type="term" value="C:lumenal side of endoplasmic reticulum membrane"/>
    <property type="evidence" value="ECO:0000304"/>
    <property type="project" value="Reactome"/>
</dbReference>
<dbReference type="GO" id="GO:0033162">
    <property type="term" value="C:melanosome membrane"/>
    <property type="evidence" value="ECO:0007669"/>
    <property type="project" value="UniProtKB-SubCell"/>
</dbReference>
<dbReference type="GO" id="GO:0016020">
    <property type="term" value="C:membrane"/>
    <property type="evidence" value="ECO:0000314"/>
    <property type="project" value="MGI"/>
</dbReference>
<dbReference type="GO" id="GO:0044233">
    <property type="term" value="C:mitochondria-associated endoplasmic reticulum membrane contact site"/>
    <property type="evidence" value="ECO:0000266"/>
    <property type="project" value="MGI"/>
</dbReference>
<dbReference type="GO" id="GO:0031966">
    <property type="term" value="C:mitochondrial membrane"/>
    <property type="evidence" value="ECO:0007669"/>
    <property type="project" value="UniProtKB-SubCell"/>
</dbReference>
<dbReference type="GO" id="GO:0043209">
    <property type="term" value="C:myelin sheath"/>
    <property type="evidence" value="ECO:0007005"/>
    <property type="project" value="UniProtKB"/>
</dbReference>
<dbReference type="GO" id="GO:0031965">
    <property type="term" value="C:nuclear membrane"/>
    <property type="evidence" value="ECO:0000314"/>
    <property type="project" value="MGI"/>
</dbReference>
<dbReference type="GO" id="GO:0098793">
    <property type="term" value="C:presynapse"/>
    <property type="evidence" value="ECO:0007669"/>
    <property type="project" value="GOC"/>
</dbReference>
<dbReference type="GO" id="GO:0005509">
    <property type="term" value="F:calcium ion binding"/>
    <property type="evidence" value="ECO:0007669"/>
    <property type="project" value="InterPro"/>
</dbReference>
<dbReference type="GO" id="GO:0030246">
    <property type="term" value="F:carbohydrate binding"/>
    <property type="evidence" value="ECO:0007669"/>
    <property type="project" value="UniProtKB-KW"/>
</dbReference>
<dbReference type="GO" id="GO:0051082">
    <property type="term" value="F:unfolded protein binding"/>
    <property type="evidence" value="ECO:0007669"/>
    <property type="project" value="InterPro"/>
</dbReference>
<dbReference type="GO" id="GO:0072583">
    <property type="term" value="P:clathrin-dependent endocytosis"/>
    <property type="evidence" value="ECO:0000315"/>
    <property type="project" value="UniProtKB"/>
</dbReference>
<dbReference type="GO" id="GO:0006457">
    <property type="term" value="P:protein folding"/>
    <property type="evidence" value="ECO:0007669"/>
    <property type="project" value="InterPro"/>
</dbReference>
<dbReference type="GO" id="GO:0048488">
    <property type="term" value="P:synaptic vesicle endocytosis"/>
    <property type="evidence" value="ECO:0000314"/>
    <property type="project" value="SynGO"/>
</dbReference>
<dbReference type="FunFam" id="2.10.250.10:FF:000001">
    <property type="entry name" value="Calnexin homolog"/>
    <property type="match status" value="1"/>
</dbReference>
<dbReference type="FunFam" id="2.60.120.200:FF:000430">
    <property type="entry name" value="Si:ch211-274f20.2"/>
    <property type="match status" value="1"/>
</dbReference>
<dbReference type="Gene3D" id="2.60.120.200">
    <property type="match status" value="1"/>
</dbReference>
<dbReference type="Gene3D" id="2.10.250.10">
    <property type="entry name" value="Calreticulin/calnexin, P domain"/>
    <property type="match status" value="1"/>
</dbReference>
<dbReference type="InterPro" id="IPR001580">
    <property type="entry name" value="Calret/calnex"/>
</dbReference>
<dbReference type="InterPro" id="IPR018124">
    <property type="entry name" value="Calret/calnex_CS"/>
</dbReference>
<dbReference type="InterPro" id="IPR009033">
    <property type="entry name" value="Calreticulin/calnexin_P_dom_sf"/>
</dbReference>
<dbReference type="InterPro" id="IPR013320">
    <property type="entry name" value="ConA-like_dom_sf"/>
</dbReference>
<dbReference type="PANTHER" id="PTHR11073:SF11">
    <property type="entry name" value="CALNEXIN"/>
    <property type="match status" value="1"/>
</dbReference>
<dbReference type="PANTHER" id="PTHR11073">
    <property type="entry name" value="CALRETICULIN AND CALNEXIN"/>
    <property type="match status" value="1"/>
</dbReference>
<dbReference type="Pfam" id="PF00262">
    <property type="entry name" value="Calreticulin"/>
    <property type="match status" value="1"/>
</dbReference>
<dbReference type="PRINTS" id="PR00626">
    <property type="entry name" value="CALRETICULIN"/>
</dbReference>
<dbReference type="SUPFAM" id="SSF49899">
    <property type="entry name" value="Concanavalin A-like lectins/glucanases"/>
    <property type="match status" value="2"/>
</dbReference>
<dbReference type="SUPFAM" id="SSF63887">
    <property type="entry name" value="P-domain of calnexin/calreticulin"/>
    <property type="match status" value="1"/>
</dbReference>
<dbReference type="PROSITE" id="PS00803">
    <property type="entry name" value="CALRETICULIN_1"/>
    <property type="match status" value="1"/>
</dbReference>
<dbReference type="PROSITE" id="PS00804">
    <property type="entry name" value="CALRETICULIN_2"/>
    <property type="match status" value="1"/>
</dbReference>
<dbReference type="PROSITE" id="PS00805">
    <property type="entry name" value="CALRETICULIN_REPEAT"/>
    <property type="match status" value="3"/>
</dbReference>
<name>CALX_MOUSE</name>
<evidence type="ECO:0000250" key="1"/>
<evidence type="ECO:0000250" key="2">
    <source>
        <dbReference type="UniProtKB" id="P14211"/>
    </source>
</evidence>
<evidence type="ECO:0000250" key="3">
    <source>
        <dbReference type="UniProtKB" id="P24643"/>
    </source>
</evidence>
<evidence type="ECO:0000250" key="4">
    <source>
        <dbReference type="UniProtKB" id="P27824"/>
    </source>
</evidence>
<evidence type="ECO:0000250" key="5">
    <source>
        <dbReference type="UniProtKB" id="P35565"/>
    </source>
</evidence>
<evidence type="ECO:0000255" key="6"/>
<evidence type="ECO:0000256" key="7">
    <source>
        <dbReference type="SAM" id="MobiDB-lite"/>
    </source>
</evidence>
<evidence type="ECO:0000269" key="8">
    <source>
    </source>
</evidence>
<evidence type="ECO:0000269" key="9">
    <source>
    </source>
</evidence>
<evidence type="ECO:0000269" key="10">
    <source>
    </source>
</evidence>
<evidence type="ECO:0000269" key="11">
    <source>
    </source>
</evidence>
<evidence type="ECO:0000305" key="12"/>
<evidence type="ECO:0007744" key="13">
    <source>
    </source>
</evidence>
<evidence type="ECO:0007744" key="14">
    <source>
    </source>
</evidence>
<evidence type="ECO:0007744" key="15">
    <source>
    </source>
</evidence>
<evidence type="ECO:0007744" key="16">
    <source>
    </source>
</evidence>
<evidence type="ECO:0007744" key="17">
    <source>
    </source>
</evidence>
<organism>
    <name type="scientific">Mus musculus</name>
    <name type="common">Mouse</name>
    <dbReference type="NCBI Taxonomy" id="10090"/>
    <lineage>
        <taxon>Eukaryota</taxon>
        <taxon>Metazoa</taxon>
        <taxon>Chordata</taxon>
        <taxon>Craniata</taxon>
        <taxon>Vertebrata</taxon>
        <taxon>Euteleostomi</taxon>
        <taxon>Mammalia</taxon>
        <taxon>Eutheria</taxon>
        <taxon>Euarchontoglires</taxon>
        <taxon>Glires</taxon>
        <taxon>Rodentia</taxon>
        <taxon>Myomorpha</taxon>
        <taxon>Muroidea</taxon>
        <taxon>Muridae</taxon>
        <taxon>Murinae</taxon>
        <taxon>Mus</taxon>
        <taxon>Mus</taxon>
    </lineage>
</organism>
<proteinExistence type="evidence at protein level"/>
<protein>
    <recommendedName>
        <fullName>Calnexin</fullName>
    </recommendedName>
</protein>
<comment type="function">
    <text evidence="9 11">Calcium-binding protein that interacts with newly synthesized monoglucosylated glycoproteins in the endoplasmic reticulum. It may act in assisting protein assembly and/or in the retention within the ER of unassembled protein subunits. It seems to play a major role in the quality control apparatus of the ER by the retention of incorrectly folded proteins. Associated with partial T-cell antigen receptor complexes that escape the ER of immature thymocytes, it may function as a signaling complex regulating thymocyte maturation. Additionally it may play a role in receptor-mediated endocytosis at the synapse.</text>
</comment>
<comment type="subunit">
    <text evidence="4 5 8 9 10">Interacts with MAPK3/ERK1 (By similarity). Interacts with KCNH2 (By similarity). Associates with ribosomes (By similarity). The palmitoylated form interacts with the ribosome-translocon complex component SSR1, promoting efficient folding of glycoproteins (By similarity). Interacts with SERPINA2P/SERPINA2 and with the S and Z variants of SERPINA1 (By similarity). Interacts with SGIP1; involved in negative regulation of endocytosis (PubMed:21747946). Interacts with PPIB (By similarity). Interacts with SMIM22 (By similarity). Interacts with TMX2 (By similarity). Interacts with TMEM35A/NACHO (PubMed:32783947). Interacts with CHRNA7 (By similarity). Interacts with reticulophagy regulators RETREG2 and RETREG3 (By similarity). Interacts with DNM1L; may form part of a larger protein complex at the ER-mitochondrial interface during mitochondrial fission (By similarity). Interacts with ADAM7 (PubMed:20945367).</text>
</comment>
<comment type="interaction">
    <interactant intactId="EBI-738422">
        <id>P35564</id>
    </interactant>
    <interactant intactId="EBI-776269">
        <id>Q8VD37</id>
        <label>Sgip1</label>
    </interactant>
    <organismsDiffer>false</organismsDiffer>
    <experiments>3</experiments>
</comment>
<comment type="subcellular location">
    <subcellularLocation>
        <location evidence="11">Endoplasmic reticulum membrane</location>
        <topology evidence="6">Single-pass type I membrane protein</topology>
    </subcellularLocation>
    <subcellularLocation>
        <location evidence="3">Mitochondrion membrane</location>
        <topology evidence="6">Single-pass type I membrane protein</topology>
    </subcellularLocation>
    <subcellularLocation>
        <location evidence="4">Melanosome membrane</location>
        <topology evidence="6">Single-pass type I membrane protein</topology>
    </subcellularLocation>
    <text evidence="3 4">The palmitoylated form preferentially localizes to the perinuclear rough ER (By similarity). When bound to CD3 epsilon chains, calnexin's ER retention signal can be masked, permitting it to escape ER retention (By similarity). Localizes to endoplasmic reticulum mitochondria-associated membrane (MAMs) that connect the endoplasmic reticulum and the mitochondria (By similarity).</text>
</comment>
<comment type="tissue specificity">
    <text evidence="8">Expressed in sperm (at protein level).</text>
</comment>
<comment type="PTM">
    <text evidence="1">Phosphorylated at Ser-563 by MAPK3/ERK1. Phosphorylation by MAPK3/ERK1 increases its association with ribosomes (By similarity).</text>
</comment>
<comment type="PTM">
    <text evidence="1">Palmitoylation by DHHC6 leads to the preferential localization to the perinuclear rough ER. It mediates the association of calnexin with the ribosome-translocon complex (RTC) which is required for efficient folding of glycosylated proteins (By similarity).</text>
</comment>
<comment type="PTM">
    <text evidence="4">Ubiquitinated, leading to proteasomal degradation. Probably ubiquitinated by ZNRF4.</text>
</comment>
<comment type="similarity">
    <text evidence="12">Belongs to the calreticulin family.</text>
</comment>
<keyword id="KW-0007">Acetylation</keyword>
<keyword id="KW-0106">Calcium</keyword>
<keyword id="KW-0143">Chaperone</keyword>
<keyword id="KW-1015">Disulfide bond</keyword>
<keyword id="KW-0256">Endoplasmic reticulum</keyword>
<keyword id="KW-0430">Lectin</keyword>
<keyword id="KW-0449">Lipoprotein</keyword>
<keyword id="KW-0472">Membrane</keyword>
<keyword id="KW-0479">Metal-binding</keyword>
<keyword id="KW-0496">Mitochondrion</keyword>
<keyword id="KW-0564">Palmitate</keyword>
<keyword id="KW-0597">Phosphoprotein</keyword>
<keyword id="KW-1185">Reference proteome</keyword>
<keyword id="KW-0677">Repeat</keyword>
<keyword id="KW-0732">Signal</keyword>
<keyword id="KW-0812">Transmembrane</keyword>
<keyword id="KW-1133">Transmembrane helix</keyword>
<keyword id="KW-0832">Ubl conjugation</keyword>
<gene>
    <name type="primary">Canx</name>
</gene>
<accession>P35564</accession>
<feature type="signal peptide" evidence="6">
    <location>
        <begin position="1"/>
        <end position="20"/>
    </location>
</feature>
<feature type="chain" id="PRO_0000004199" description="Calnexin">
    <location>
        <begin position="21"/>
        <end position="591"/>
    </location>
</feature>
<feature type="topological domain" description="Lumenal" evidence="6">
    <location>
        <begin position="21"/>
        <end position="482"/>
    </location>
</feature>
<feature type="transmembrane region" description="Helical" evidence="6">
    <location>
        <begin position="483"/>
        <end position="503"/>
    </location>
</feature>
<feature type="topological domain" description="Cytoplasmic" evidence="6">
    <location>
        <begin position="504"/>
        <end position="591"/>
    </location>
</feature>
<feature type="repeat" description="1-1">
    <location>
        <begin position="279"/>
        <end position="291"/>
    </location>
</feature>
<feature type="repeat" description="1-2">
    <location>
        <begin position="296"/>
        <end position="308"/>
    </location>
</feature>
<feature type="repeat" description="1-3">
    <location>
        <begin position="315"/>
        <end position="327"/>
    </location>
</feature>
<feature type="repeat" description="1-4">
    <location>
        <begin position="334"/>
        <end position="346"/>
    </location>
</feature>
<feature type="repeat" description="2-1">
    <location>
        <begin position="349"/>
        <end position="359"/>
    </location>
</feature>
<feature type="repeat" description="2-2">
    <location>
        <begin position="368"/>
        <end position="378"/>
    </location>
</feature>
<feature type="repeat" description="2-3">
    <location>
        <begin position="382"/>
        <end position="392"/>
    </location>
</feature>
<feature type="repeat" description="2-4">
    <location>
        <begin position="396"/>
        <end position="406"/>
    </location>
</feature>
<feature type="region of interest" description="Disordered" evidence="7">
    <location>
        <begin position="261"/>
        <end position="347"/>
    </location>
</feature>
<feature type="region of interest" description="P domain (Extended arm)" evidence="1">
    <location>
        <begin position="277"/>
        <end position="410"/>
    </location>
</feature>
<feature type="region of interest" description="4 X approximate repeats">
    <location>
        <begin position="279"/>
        <end position="346"/>
    </location>
</feature>
<feature type="region of interest" description="Interaction with PPIB" evidence="1">
    <location>
        <begin position="327"/>
        <end position="360"/>
    </location>
</feature>
<feature type="region of interest" description="4 X approximate repeats">
    <location>
        <begin position="349"/>
        <end position="406"/>
    </location>
</feature>
<feature type="region of interest" description="Sufficient to mediate interaction with SGIP1" evidence="9">
    <location>
        <begin position="504"/>
        <end position="591"/>
    </location>
</feature>
<feature type="region of interest" description="Disordered" evidence="7">
    <location>
        <begin position="514"/>
        <end position="591"/>
    </location>
</feature>
<feature type="compositionally biased region" description="Basic and acidic residues" evidence="7">
    <location>
        <begin position="275"/>
        <end position="320"/>
    </location>
</feature>
<feature type="compositionally biased region" description="Acidic residues" evidence="7">
    <location>
        <begin position="324"/>
        <end position="347"/>
    </location>
</feature>
<feature type="compositionally biased region" description="Basic and acidic residues" evidence="7">
    <location>
        <begin position="514"/>
        <end position="539"/>
    </location>
</feature>
<feature type="compositionally biased region" description="Acidic residues" evidence="7">
    <location>
        <begin position="555"/>
        <end position="568"/>
    </location>
</feature>
<feature type="binding site" evidence="3">
    <location>
        <position position="75"/>
    </location>
    <ligand>
        <name>Ca(2+)</name>
        <dbReference type="ChEBI" id="CHEBI:29108"/>
    </ligand>
</feature>
<feature type="binding site" evidence="3">
    <location>
        <position position="118"/>
    </location>
    <ligand>
        <name>Ca(2+)</name>
        <dbReference type="ChEBI" id="CHEBI:29108"/>
    </ligand>
</feature>
<feature type="binding site" evidence="2">
    <location>
        <position position="165"/>
    </location>
    <ligand>
        <name>an alpha-D-glucoside</name>
        <dbReference type="ChEBI" id="CHEBI:22390"/>
    </ligand>
</feature>
<feature type="binding site" evidence="2">
    <location>
        <position position="167"/>
    </location>
    <ligand>
        <name>an alpha-D-glucoside</name>
        <dbReference type="ChEBI" id="CHEBI:22390"/>
    </ligand>
</feature>
<feature type="binding site" evidence="2">
    <location>
        <position position="186"/>
    </location>
    <ligand>
        <name>an alpha-D-glucoside</name>
        <dbReference type="ChEBI" id="CHEBI:22390"/>
    </ligand>
</feature>
<feature type="binding site" evidence="2">
    <location>
        <position position="193"/>
    </location>
    <ligand>
        <name>an alpha-D-glucoside</name>
        <dbReference type="ChEBI" id="CHEBI:22390"/>
    </ligand>
</feature>
<feature type="binding site" evidence="2">
    <location>
        <position position="426"/>
    </location>
    <ligand>
        <name>an alpha-D-glucoside</name>
        <dbReference type="ChEBI" id="CHEBI:22390"/>
    </ligand>
</feature>
<feature type="binding site" evidence="3">
    <location>
        <position position="437"/>
    </location>
    <ligand>
        <name>Ca(2+)</name>
        <dbReference type="ChEBI" id="CHEBI:29108"/>
    </ligand>
</feature>
<feature type="modified residue" description="N6-acetyllysine" evidence="4">
    <location>
        <position position="138"/>
    </location>
</feature>
<feature type="modified residue" description="Phosphoserine" evidence="13 14 16 17">
    <location>
        <position position="553"/>
    </location>
</feature>
<feature type="modified residue" description="Phosphothreonine" evidence="4">
    <location>
        <position position="561"/>
    </location>
</feature>
<feature type="modified residue" description="Phosphoserine; by MAPK3" evidence="13 16 17">
    <location>
        <position position="563"/>
    </location>
</feature>
<feature type="modified residue" description="Phosphoserine" evidence="13 15 16">
    <location>
        <position position="582"/>
    </location>
</feature>
<feature type="lipid moiety-binding region" description="S-palmitoyl cysteine" evidence="1">
    <location>
        <position position="503"/>
    </location>
</feature>
<feature type="lipid moiety-binding region" description="S-palmitoyl cysteine" evidence="1">
    <location>
        <position position="504"/>
    </location>
</feature>
<feature type="disulfide bond" evidence="3">
    <location>
        <begin position="161"/>
        <end position="195"/>
    </location>
</feature>
<feature type="disulfide bond" evidence="3">
    <location>
        <begin position="361"/>
        <end position="367"/>
    </location>
</feature>
<feature type="sequence conflict" description="In Ref. 4; AAA62450." evidence="12" ref="4">
    <original>K</original>
    <variation>R</variation>
    <location>
        <position position="416"/>
    </location>
</feature>
<feature type="sequence conflict" description="In Ref. 4; AAA62450." evidence="12" ref="4">
    <original>P</original>
    <variation>L</variation>
    <location>
        <position position="468"/>
    </location>
</feature>
<feature type="sequence conflict" description="In Ref. 4; AAA62450." evidence="12" ref="4">
    <original>L</original>
    <variation>G</variation>
    <location>
        <position position="472"/>
    </location>
</feature>
<feature type="sequence conflict" description="In Ref. 4; AAA62450." evidence="12" ref="4">
    <original>R</original>
    <variation>G</variation>
    <location>
        <position position="538"/>
    </location>
</feature>
<feature type="sequence conflict" description="In Ref. 4; AAA62450." evidence="12" ref="4">
    <original>V</original>
    <variation>G</variation>
    <location>
        <position position="560"/>
    </location>
</feature>
<reference key="1">
    <citation type="journal article" date="1994" name="Biochemistry">
        <title>Human, mouse, and rat calnexin cDNA cloning: identification of potential calcium binding motifs and gene localization to human chromosome 5.</title>
        <authorList>
            <person name="Tjoelker L.W."/>
            <person name="Seyfried C.E."/>
            <person name="Eddy R.L. Jr."/>
            <person name="Shows T.B. Jr."/>
            <person name="Calderon J."/>
            <person name="Schreiber R.B."/>
            <person name="Gray P.W."/>
        </authorList>
    </citation>
    <scope>NUCLEOTIDE SEQUENCE [MRNA]</scope>
</reference>
<reference key="2">
    <citation type="journal article" date="2004" name="Genome Res.">
        <title>The status, quality, and expansion of the NIH full-length cDNA project: the Mammalian Gene Collection (MGC).</title>
        <authorList>
            <consortium name="The MGC Project Team"/>
        </authorList>
    </citation>
    <scope>NUCLEOTIDE SEQUENCE [LARGE SCALE MRNA]</scope>
    <source>
        <strain>FVB/N</strain>
        <tissue>Mammary gland</tissue>
    </source>
</reference>
<reference key="3">
    <citation type="journal article" date="2005" name="Science">
        <title>The transcriptional landscape of the mammalian genome.</title>
        <authorList>
            <person name="Carninci P."/>
            <person name="Kasukawa T."/>
            <person name="Katayama S."/>
            <person name="Gough J."/>
            <person name="Frith M.C."/>
            <person name="Maeda N."/>
            <person name="Oyama R."/>
            <person name="Ravasi T."/>
            <person name="Lenhard B."/>
            <person name="Wells C."/>
            <person name="Kodzius R."/>
            <person name="Shimokawa K."/>
            <person name="Bajic V.B."/>
            <person name="Brenner S.E."/>
            <person name="Batalov S."/>
            <person name="Forrest A.R."/>
            <person name="Zavolan M."/>
            <person name="Davis M.J."/>
            <person name="Wilming L.G."/>
            <person name="Aidinis V."/>
            <person name="Allen J.E."/>
            <person name="Ambesi-Impiombato A."/>
            <person name="Apweiler R."/>
            <person name="Aturaliya R.N."/>
            <person name="Bailey T.L."/>
            <person name="Bansal M."/>
            <person name="Baxter L."/>
            <person name="Beisel K.W."/>
            <person name="Bersano T."/>
            <person name="Bono H."/>
            <person name="Chalk A.M."/>
            <person name="Chiu K.P."/>
            <person name="Choudhary V."/>
            <person name="Christoffels A."/>
            <person name="Clutterbuck D.R."/>
            <person name="Crowe M.L."/>
            <person name="Dalla E."/>
            <person name="Dalrymple B.P."/>
            <person name="de Bono B."/>
            <person name="Della Gatta G."/>
            <person name="di Bernardo D."/>
            <person name="Down T."/>
            <person name="Engstrom P."/>
            <person name="Fagiolini M."/>
            <person name="Faulkner G."/>
            <person name="Fletcher C.F."/>
            <person name="Fukushima T."/>
            <person name="Furuno M."/>
            <person name="Futaki S."/>
            <person name="Gariboldi M."/>
            <person name="Georgii-Hemming P."/>
            <person name="Gingeras T.R."/>
            <person name="Gojobori T."/>
            <person name="Green R.E."/>
            <person name="Gustincich S."/>
            <person name="Harbers M."/>
            <person name="Hayashi Y."/>
            <person name="Hensch T.K."/>
            <person name="Hirokawa N."/>
            <person name="Hill D."/>
            <person name="Huminiecki L."/>
            <person name="Iacono M."/>
            <person name="Ikeo K."/>
            <person name="Iwama A."/>
            <person name="Ishikawa T."/>
            <person name="Jakt M."/>
            <person name="Kanapin A."/>
            <person name="Katoh M."/>
            <person name="Kawasawa Y."/>
            <person name="Kelso J."/>
            <person name="Kitamura H."/>
            <person name="Kitano H."/>
            <person name="Kollias G."/>
            <person name="Krishnan S.P."/>
            <person name="Kruger A."/>
            <person name="Kummerfeld S.K."/>
            <person name="Kurochkin I.V."/>
            <person name="Lareau L.F."/>
            <person name="Lazarevic D."/>
            <person name="Lipovich L."/>
            <person name="Liu J."/>
            <person name="Liuni S."/>
            <person name="McWilliam S."/>
            <person name="Madan Babu M."/>
            <person name="Madera M."/>
            <person name="Marchionni L."/>
            <person name="Matsuda H."/>
            <person name="Matsuzawa S."/>
            <person name="Miki H."/>
            <person name="Mignone F."/>
            <person name="Miyake S."/>
            <person name="Morris K."/>
            <person name="Mottagui-Tabar S."/>
            <person name="Mulder N."/>
            <person name="Nakano N."/>
            <person name="Nakauchi H."/>
            <person name="Ng P."/>
            <person name="Nilsson R."/>
            <person name="Nishiguchi S."/>
            <person name="Nishikawa S."/>
            <person name="Nori F."/>
            <person name="Ohara O."/>
            <person name="Okazaki Y."/>
            <person name="Orlando V."/>
            <person name="Pang K.C."/>
            <person name="Pavan W.J."/>
            <person name="Pavesi G."/>
            <person name="Pesole G."/>
            <person name="Petrovsky N."/>
            <person name="Piazza S."/>
            <person name="Reed J."/>
            <person name="Reid J.F."/>
            <person name="Ring B.Z."/>
            <person name="Ringwald M."/>
            <person name="Rost B."/>
            <person name="Ruan Y."/>
            <person name="Salzberg S.L."/>
            <person name="Sandelin A."/>
            <person name="Schneider C."/>
            <person name="Schoenbach C."/>
            <person name="Sekiguchi K."/>
            <person name="Semple C.A."/>
            <person name="Seno S."/>
            <person name="Sessa L."/>
            <person name="Sheng Y."/>
            <person name="Shibata Y."/>
            <person name="Shimada H."/>
            <person name="Shimada K."/>
            <person name="Silva D."/>
            <person name="Sinclair B."/>
            <person name="Sperling S."/>
            <person name="Stupka E."/>
            <person name="Sugiura K."/>
            <person name="Sultana R."/>
            <person name="Takenaka Y."/>
            <person name="Taki K."/>
            <person name="Tammoja K."/>
            <person name="Tan S.L."/>
            <person name="Tang S."/>
            <person name="Taylor M.S."/>
            <person name="Tegner J."/>
            <person name="Teichmann S.A."/>
            <person name="Ueda H.R."/>
            <person name="van Nimwegen E."/>
            <person name="Verardo R."/>
            <person name="Wei C.L."/>
            <person name="Yagi K."/>
            <person name="Yamanishi H."/>
            <person name="Zabarovsky E."/>
            <person name="Zhu S."/>
            <person name="Zimmer A."/>
            <person name="Hide W."/>
            <person name="Bult C."/>
            <person name="Grimmond S.M."/>
            <person name="Teasdale R.D."/>
            <person name="Liu E.T."/>
            <person name="Brusic V."/>
            <person name="Quackenbush J."/>
            <person name="Wahlestedt C."/>
            <person name="Mattick J.S."/>
            <person name="Hume D.A."/>
            <person name="Kai C."/>
            <person name="Sasaki D."/>
            <person name="Tomaru Y."/>
            <person name="Fukuda S."/>
            <person name="Kanamori-Katayama M."/>
            <person name="Suzuki M."/>
            <person name="Aoki J."/>
            <person name="Arakawa T."/>
            <person name="Iida J."/>
            <person name="Imamura K."/>
            <person name="Itoh M."/>
            <person name="Kato T."/>
            <person name="Kawaji H."/>
            <person name="Kawagashira N."/>
            <person name="Kawashima T."/>
            <person name="Kojima M."/>
            <person name="Kondo S."/>
            <person name="Konno H."/>
            <person name="Nakano K."/>
            <person name="Ninomiya N."/>
            <person name="Nishio T."/>
            <person name="Okada M."/>
            <person name="Plessy C."/>
            <person name="Shibata K."/>
            <person name="Shiraki T."/>
            <person name="Suzuki S."/>
            <person name="Tagami M."/>
            <person name="Waki K."/>
            <person name="Watahiki A."/>
            <person name="Okamura-Oho Y."/>
            <person name="Suzuki H."/>
            <person name="Kawai J."/>
            <person name="Hayashizaki Y."/>
        </authorList>
    </citation>
    <scope>NUCLEOTIDE SEQUENCE [LARGE SCALE MRNA] OF 1-155</scope>
    <source>
        <strain>C57BL/6J</strain>
        <tissue>Eye</tissue>
    </source>
</reference>
<reference key="4">
    <citation type="journal article" date="1994" name="Int. Immunol.">
        <title>Class II histocompatibility molecules associate with calnexin during assembly in the endoplasmic reticulum.</title>
        <authorList>
            <person name="Schreiber K.L."/>
            <person name="Bell M.P."/>
            <person name="Huntoon C.J."/>
            <person name="Rajagopalan S."/>
            <person name="Brenner M.B."/>
            <person name="McKean D.J."/>
        </authorList>
    </citation>
    <scope>NUCLEOTIDE SEQUENCE [MRNA] OF 21-591</scope>
    <source>
        <strain>BALB/cJ</strain>
    </source>
</reference>
<reference key="5">
    <citation type="journal article" date="1995" name="EMBO J.">
        <title>The molecular chaperone calnexin is expressed on the surface of immature thymocytes in association with clonotype-independent CD3 complexes.</title>
        <authorList>
            <person name="Wiest D.L."/>
            <person name="Burgess W.H."/>
            <person name="McKean D."/>
            <person name="Kearse K.P."/>
            <person name="Singer A."/>
        </authorList>
    </citation>
    <scope>FUNCTION IN THYMOCYTE MATURATION</scope>
    <scope>SUBCELLULAR LOCATION</scope>
</reference>
<reference key="6">
    <citation type="journal article" date="2007" name="J. Proteome Res.">
        <title>A differential phosphoproteomic analysis of retinoic acid-treated P19 cells.</title>
        <authorList>
            <person name="Smith J.C."/>
            <person name="Duchesne M.A."/>
            <person name="Tozzi P."/>
            <person name="Ethier M."/>
            <person name="Figeys D."/>
        </authorList>
    </citation>
    <scope>PHOSPHORYLATION [LARGE SCALE ANALYSIS] AT SER-553</scope>
    <scope>IDENTIFICATION BY MASS SPECTROMETRY [LARGE SCALE ANALYSIS]</scope>
    <source>
        <tissue>Teratocarcinoma</tissue>
    </source>
</reference>
<reference key="7">
    <citation type="journal article" date="2007" name="Mol. Cell. Proteomics">
        <title>Qualitative and quantitative analyses of protein phosphorylation in naive and stimulated mouse synaptosomal preparations.</title>
        <authorList>
            <person name="Munton R.P."/>
            <person name="Tweedie-Cullen R."/>
            <person name="Livingstone-Zatchej M."/>
            <person name="Weinandy F."/>
            <person name="Waidelich M."/>
            <person name="Longo D."/>
            <person name="Gehrig P."/>
            <person name="Potthast F."/>
            <person name="Rutishauser D."/>
            <person name="Gerrits B."/>
            <person name="Panse C."/>
            <person name="Schlapbach R."/>
            <person name="Mansuy I.M."/>
        </authorList>
    </citation>
    <scope>IDENTIFICATION BY MASS SPECTROMETRY [LARGE SCALE ANALYSIS]</scope>
    <source>
        <tissue>Brain cortex</tissue>
    </source>
</reference>
<reference key="8">
    <citation type="journal article" date="2007" name="Mol. Cell. Proteomics">
        <title>Mitochondrial phosphoproteome revealed by an improved IMAC method and MS/MS/MS.</title>
        <authorList>
            <person name="Lee J."/>
            <person name="Xu Y."/>
            <person name="Chen Y."/>
            <person name="Sprung R."/>
            <person name="Kim S.C."/>
            <person name="Xie S."/>
            <person name="Zhao Y."/>
        </authorList>
    </citation>
    <scope>PHOSPHORYLATION [LARGE SCALE ANALYSIS] AT SER-553; SER-563 AND SER-582</scope>
    <scope>IDENTIFICATION BY MASS SPECTROMETRY [LARGE SCALE ANALYSIS]</scope>
    <source>
        <tissue>Liver</tissue>
    </source>
</reference>
<reference key="9">
    <citation type="journal article" date="2008" name="J. Proteome Res.">
        <title>Specific phosphopeptide enrichment with immobilized titanium ion affinity chromatography adsorbent for phosphoproteome analysis.</title>
        <authorList>
            <person name="Zhou H."/>
            <person name="Ye M."/>
            <person name="Dong J."/>
            <person name="Han G."/>
            <person name="Jiang X."/>
            <person name="Wu R."/>
            <person name="Zou H."/>
        </authorList>
    </citation>
    <scope>IDENTIFICATION BY MASS SPECTROMETRY [LARGE SCALE ANALYSIS]</scope>
    <source>
        <tissue>Liver</tissue>
    </source>
</reference>
<reference key="10">
    <citation type="journal article" date="2009" name="Immunity">
        <title>The phagosomal proteome in interferon-gamma-activated macrophages.</title>
        <authorList>
            <person name="Trost M."/>
            <person name="English L."/>
            <person name="Lemieux S."/>
            <person name="Courcelles M."/>
            <person name="Desjardins M."/>
            <person name="Thibault P."/>
        </authorList>
    </citation>
    <scope>PHOSPHORYLATION [LARGE SCALE ANALYSIS] AT SER-553; SER-563 AND SER-582</scope>
    <scope>IDENTIFICATION BY MASS SPECTROMETRY [LARGE SCALE ANALYSIS]</scope>
</reference>
<reference key="11">
    <citation type="journal article" date="2009" name="Mol. Cell. Proteomics">
        <title>Large scale localization of protein phosphorylation by use of electron capture dissociation mass spectrometry.</title>
        <authorList>
            <person name="Sweet S.M."/>
            <person name="Bailey C.M."/>
            <person name="Cunningham D.L."/>
            <person name="Heath J.K."/>
            <person name="Cooper H.J."/>
        </authorList>
    </citation>
    <scope>PHOSPHORYLATION [LARGE SCALE ANALYSIS] AT SER-582</scope>
    <scope>IDENTIFICATION BY MASS SPECTROMETRY [LARGE SCALE ANALYSIS]</scope>
    <source>
        <tissue>Embryonic fibroblast</tissue>
    </source>
</reference>
<reference key="12">
    <citation type="journal article" date="2010" name="Cell">
        <title>A tissue-specific atlas of mouse protein phosphorylation and expression.</title>
        <authorList>
            <person name="Huttlin E.L."/>
            <person name="Jedrychowski M.P."/>
            <person name="Elias J.E."/>
            <person name="Goswami T."/>
            <person name="Rad R."/>
            <person name="Beausoleil S.A."/>
            <person name="Villen J."/>
            <person name="Haas W."/>
            <person name="Sowa M.E."/>
            <person name="Gygi S.P."/>
        </authorList>
    </citation>
    <scope>PHOSPHORYLATION [LARGE SCALE ANALYSIS] AT SER-553 AND SER-563</scope>
    <scope>IDENTIFICATION BY MASS SPECTROMETRY [LARGE SCALE ANALYSIS]</scope>
    <source>
        <tissue>Brain</tissue>
        <tissue>Brown adipose tissue</tissue>
        <tissue>Heart</tissue>
        <tissue>Kidney</tissue>
        <tissue>Liver</tissue>
        <tissue>Lung</tissue>
        <tissue>Pancreas</tissue>
        <tissue>Spleen</tissue>
        <tissue>Testis</tissue>
    </source>
</reference>
<reference key="13">
    <citation type="journal article" date="2011" name="J. Cell. Physiol.">
        <title>Identification of heat shock protein 5, calnexin and integral membrane protein 2B as Adam7-interacting membrane proteins in mouse sperm.</title>
        <authorList>
            <person name="Han C."/>
            <person name="Park I."/>
            <person name="Lee B."/>
            <person name="Jin S."/>
            <person name="Choi H."/>
            <person name="Kwon J.T."/>
            <person name="Kwon Y.I."/>
            <person name="Kim D.H."/>
            <person name="Park Z.Y."/>
            <person name="Cho C."/>
        </authorList>
    </citation>
    <scope>INTERACTION WITH ADAM7</scope>
    <scope>TISSUE SPECIFICITY</scope>
</reference>
<reference key="14">
    <citation type="journal article" date="2011" name="PLoS ONE">
        <title>Enhanced clathrin-dependent endocytosis in the absence of calnexin.</title>
        <authorList>
            <person name="Li H.D."/>
            <person name="Liu W.X."/>
            <person name="Michalak M."/>
        </authorList>
    </citation>
    <scope>FUNCTION</scope>
    <scope>INTERACTION WITH SGIP1</scope>
</reference>
<reference key="15">
    <citation type="journal article" date="2020" name="Cell Rep.">
        <title>NACHO Engages N-Glycosylation ER Chaperone Pathways for alpha7 Nicotinic Receptor Assembly.</title>
        <authorList>
            <person name="Kweon H.J."/>
            <person name="Gu S."/>
            <person name="Witham E."/>
            <person name="Dhara M."/>
            <person name="Yu H."/>
            <person name="Mandon E.D."/>
            <person name="Jawhari A."/>
            <person name="Bredt D.S."/>
        </authorList>
    </citation>
    <scope>INTERACTION WITH TMEM35A/NACHO</scope>
</reference>